<organism>
    <name type="scientific">Mus musculus</name>
    <name type="common">Mouse</name>
    <dbReference type="NCBI Taxonomy" id="10090"/>
    <lineage>
        <taxon>Eukaryota</taxon>
        <taxon>Metazoa</taxon>
        <taxon>Chordata</taxon>
        <taxon>Craniata</taxon>
        <taxon>Vertebrata</taxon>
        <taxon>Euteleostomi</taxon>
        <taxon>Mammalia</taxon>
        <taxon>Eutheria</taxon>
        <taxon>Euarchontoglires</taxon>
        <taxon>Glires</taxon>
        <taxon>Rodentia</taxon>
        <taxon>Myomorpha</taxon>
        <taxon>Muroidea</taxon>
        <taxon>Muridae</taxon>
        <taxon>Murinae</taxon>
        <taxon>Mus</taxon>
        <taxon>Mus</taxon>
    </lineage>
</organism>
<keyword id="KW-0966">Cell projection</keyword>
<keyword id="KW-0175">Coiled coil</keyword>
<keyword id="KW-0963">Cytoplasm</keyword>
<keyword id="KW-0967">Endosome</keyword>
<keyword id="KW-0378">Hydrolase</keyword>
<keyword id="KW-0443">Lipid metabolism</keyword>
<keyword id="KW-0472">Membrane</keyword>
<keyword id="KW-0597">Phosphoprotein</keyword>
<keyword id="KW-1185">Reference proteome</keyword>
<feature type="chain" id="PRO_0000094935" description="Phosphatidylinositol-3,5-bisphosphate 3-phosphatase MTMR2">
    <location>
        <begin position="1"/>
        <end position="643"/>
    </location>
</feature>
<feature type="domain" description="GRAM" evidence="2">
    <location>
        <begin position="68"/>
        <end position="139"/>
    </location>
</feature>
<feature type="domain" description="Myotubularin phosphatase" evidence="3">
    <location>
        <begin position="205"/>
        <end position="580"/>
    </location>
</feature>
<feature type="region of interest" description="Disordered" evidence="4">
    <location>
        <begin position="1"/>
        <end position="52"/>
    </location>
</feature>
<feature type="region of interest" description="Disordered" evidence="4">
    <location>
        <begin position="614"/>
        <end position="643"/>
    </location>
</feature>
<feature type="coiled-coil region" evidence="6">
    <location>
        <begin position="593"/>
        <end position="627"/>
    </location>
</feature>
<feature type="compositionally biased region" description="Polar residues" evidence="4">
    <location>
        <begin position="23"/>
        <end position="40"/>
    </location>
</feature>
<feature type="compositionally biased region" description="Low complexity" evidence="4">
    <location>
        <begin position="41"/>
        <end position="52"/>
    </location>
</feature>
<feature type="compositionally biased region" description="Low complexity" evidence="4">
    <location>
        <begin position="620"/>
        <end position="631"/>
    </location>
</feature>
<feature type="compositionally biased region" description="Polar residues" evidence="4">
    <location>
        <begin position="632"/>
        <end position="643"/>
    </location>
</feature>
<feature type="active site" description="Phosphocysteine intermediate" evidence="1">
    <location>
        <position position="417"/>
    </location>
</feature>
<feature type="binding site" evidence="1">
    <location>
        <position position="330"/>
    </location>
    <ligand>
        <name>a 1,2-diacyl-sn-glycero-3-phospho-(1D-myo-inositol-3,5-bisphosphate)</name>
        <dbReference type="ChEBI" id="CHEBI:57923"/>
    </ligand>
</feature>
<feature type="binding site" evidence="1">
    <location>
        <position position="330"/>
    </location>
    <ligand>
        <name>a 1,2-diacyl-sn-glycero-3-phospho-(1D-myo-inositol-3-phosphate)</name>
        <dbReference type="ChEBI" id="CHEBI:58088"/>
    </ligand>
</feature>
<feature type="binding site" evidence="1">
    <location>
        <position position="355"/>
    </location>
    <ligand>
        <name>a 1,2-diacyl-sn-glycero-3-phospho-(1D-myo-inositol-3,5-bisphosphate)</name>
        <dbReference type="ChEBI" id="CHEBI:57923"/>
    </ligand>
</feature>
<feature type="binding site" evidence="1">
    <location>
        <position position="355"/>
    </location>
    <ligand>
        <name>a 1,2-diacyl-sn-glycero-3-phospho-(1D-myo-inositol-3-phosphate)</name>
        <dbReference type="ChEBI" id="CHEBI:58088"/>
    </ligand>
</feature>
<feature type="binding site" evidence="1">
    <location>
        <position position="356"/>
    </location>
    <ligand>
        <name>a 1,2-diacyl-sn-glycero-3-phospho-(1D-myo-inositol-3,5-bisphosphate)</name>
        <dbReference type="ChEBI" id="CHEBI:57923"/>
    </ligand>
</feature>
<feature type="binding site" evidence="1">
    <location>
        <position position="356"/>
    </location>
    <ligand>
        <name>a 1,2-diacyl-sn-glycero-3-phospho-(1D-myo-inositol-3-phosphate)</name>
        <dbReference type="ChEBI" id="CHEBI:58088"/>
    </ligand>
</feature>
<feature type="binding site" evidence="1">
    <location>
        <position position="418"/>
    </location>
    <ligand>
        <name>a 1,2-diacyl-sn-glycero-3-phospho-(1D-myo-inositol-3,5-bisphosphate)</name>
        <dbReference type="ChEBI" id="CHEBI:57923"/>
    </ligand>
</feature>
<feature type="binding site" evidence="1">
    <location>
        <position position="418"/>
    </location>
    <ligand>
        <name>a 1,2-diacyl-sn-glycero-3-phospho-(1D-myo-inositol-3-phosphate)</name>
        <dbReference type="ChEBI" id="CHEBI:58088"/>
    </ligand>
</feature>
<feature type="binding site" evidence="1">
    <location>
        <position position="419"/>
    </location>
    <ligand>
        <name>a 1,2-diacyl-sn-glycero-3-phospho-(1D-myo-inositol-3,5-bisphosphate)</name>
        <dbReference type="ChEBI" id="CHEBI:57923"/>
    </ligand>
</feature>
<feature type="binding site" evidence="1">
    <location>
        <position position="419"/>
    </location>
    <ligand>
        <name>a 1,2-diacyl-sn-glycero-3-phospho-(1D-myo-inositol-3-phosphate)</name>
        <dbReference type="ChEBI" id="CHEBI:58088"/>
    </ligand>
</feature>
<feature type="binding site" evidence="1">
    <location>
        <position position="420"/>
    </location>
    <ligand>
        <name>a 1,2-diacyl-sn-glycero-3-phospho-(1D-myo-inositol-3,5-bisphosphate)</name>
        <dbReference type="ChEBI" id="CHEBI:57923"/>
    </ligand>
</feature>
<feature type="binding site" evidence="1">
    <location>
        <position position="420"/>
    </location>
    <ligand>
        <name>a 1,2-diacyl-sn-glycero-3-phospho-(1D-myo-inositol-3-phosphate)</name>
        <dbReference type="ChEBI" id="CHEBI:58088"/>
    </ligand>
</feature>
<feature type="binding site" evidence="1">
    <location>
        <position position="421"/>
    </location>
    <ligand>
        <name>a 1,2-diacyl-sn-glycero-3-phospho-(1D-myo-inositol-3,5-bisphosphate)</name>
        <dbReference type="ChEBI" id="CHEBI:57923"/>
    </ligand>
</feature>
<feature type="binding site" evidence="1">
    <location>
        <position position="421"/>
    </location>
    <ligand>
        <name>a 1,2-diacyl-sn-glycero-3-phospho-(1D-myo-inositol-3-phosphate)</name>
        <dbReference type="ChEBI" id="CHEBI:58088"/>
    </ligand>
</feature>
<feature type="binding site" evidence="1">
    <location>
        <position position="422"/>
    </location>
    <ligand>
        <name>a 1,2-diacyl-sn-glycero-3-phospho-(1D-myo-inositol-3,5-bisphosphate)</name>
        <dbReference type="ChEBI" id="CHEBI:57923"/>
    </ligand>
</feature>
<feature type="binding site" evidence="1">
    <location>
        <position position="422"/>
    </location>
    <ligand>
        <name>a 1,2-diacyl-sn-glycero-3-phospho-(1D-myo-inositol-3-phosphate)</name>
        <dbReference type="ChEBI" id="CHEBI:58088"/>
    </ligand>
</feature>
<feature type="binding site" evidence="1">
    <location>
        <position position="423"/>
    </location>
    <ligand>
        <name>a 1,2-diacyl-sn-glycero-3-phospho-(1D-myo-inositol-3,5-bisphosphate)</name>
        <dbReference type="ChEBI" id="CHEBI:57923"/>
    </ligand>
</feature>
<feature type="binding site" evidence="1">
    <location>
        <position position="423"/>
    </location>
    <ligand>
        <name>a 1,2-diacyl-sn-glycero-3-phospho-(1D-myo-inositol-3-phosphate)</name>
        <dbReference type="ChEBI" id="CHEBI:58088"/>
    </ligand>
</feature>
<feature type="binding site" evidence="1">
    <location>
        <position position="459"/>
    </location>
    <ligand>
        <name>a 1,2-diacyl-sn-glycero-3-phospho-(1D-myo-inositol-3,5-bisphosphate)</name>
        <dbReference type="ChEBI" id="CHEBI:57923"/>
    </ligand>
</feature>
<feature type="binding site" evidence="1">
    <location>
        <position position="463"/>
    </location>
    <ligand>
        <name>a 1,2-diacyl-sn-glycero-3-phospho-(1D-myo-inositol-3,5-bisphosphate)</name>
        <dbReference type="ChEBI" id="CHEBI:57923"/>
    </ligand>
</feature>
<feature type="binding site" evidence="1">
    <location>
        <position position="463"/>
    </location>
    <ligand>
        <name>a 1,2-diacyl-sn-glycero-3-phospho-(1D-myo-inositol-3-phosphate)</name>
        <dbReference type="ChEBI" id="CHEBI:58088"/>
    </ligand>
</feature>
<feature type="modified residue" description="Phosphoserine" evidence="14 15">
    <location>
        <position position="6"/>
    </location>
</feature>
<feature type="modified residue" description="Phosphoserine" evidence="15">
    <location>
        <position position="9"/>
    </location>
</feature>
<feature type="modified residue" description="Phosphoserine" evidence="15">
    <location>
        <position position="58"/>
    </location>
</feature>
<feature type="mutagenesis site" description="Severely impaired interaction with membranes and strongly reduced catalytic activity." evidence="5 6">
    <original>G</original>
    <variation>E</variation>
    <location>
        <position position="103"/>
    </location>
</feature>
<feature type="mutagenesis site" description="Loss of activity. Does not affect the interaction with SBF2/MTMR13." evidence="6 7">
    <original>C</original>
    <variation>A</variation>
    <location>
        <position position="417"/>
    </location>
</feature>
<feature type="mutagenesis site" description="Loss of interaction with SBF2/MTMR13 which results in a decrease in SBF2/MTMR13 localization to membranes." evidence="7 8">
    <location>
        <begin position="589"/>
        <end position="643"/>
    </location>
</feature>
<name>MTMR2_MOUSE</name>
<evidence type="ECO:0000250" key="1">
    <source>
        <dbReference type="UniProtKB" id="Q13614"/>
    </source>
</evidence>
<evidence type="ECO:0000255" key="2"/>
<evidence type="ECO:0000255" key="3">
    <source>
        <dbReference type="PROSITE-ProRule" id="PRU00669"/>
    </source>
</evidence>
<evidence type="ECO:0000256" key="4">
    <source>
        <dbReference type="SAM" id="MobiDB-lite"/>
    </source>
</evidence>
<evidence type="ECO:0000269" key="5">
    <source>
    </source>
</evidence>
<evidence type="ECO:0000269" key="6">
    <source>
    </source>
</evidence>
<evidence type="ECO:0000269" key="7">
    <source>
    </source>
</evidence>
<evidence type="ECO:0000269" key="8">
    <source>
    </source>
</evidence>
<evidence type="ECO:0000269" key="9">
    <source>
    </source>
</evidence>
<evidence type="ECO:0000305" key="10"/>
<evidence type="ECO:0000305" key="11">
    <source>
    </source>
</evidence>
<evidence type="ECO:0000305" key="12">
    <source>
    </source>
</evidence>
<evidence type="ECO:0000312" key="13">
    <source>
        <dbReference type="MGI" id="MGI:1924366"/>
    </source>
</evidence>
<evidence type="ECO:0007744" key="14">
    <source>
    </source>
</evidence>
<evidence type="ECO:0007744" key="15">
    <source>
    </source>
</evidence>
<comment type="function">
    <text evidence="1 5 7">Lipid phosphatase that specifically dephosphorylates the D-3 position of phosphatidylinositol 3-phosphate and phosphatidylinositol 3,5-bisphosphate, generating phosphatidylinositol and phosphatidylinositol 5-phosphate (PubMed:12045210, PubMed:16399794). Regulates the level of these phosphoinositides critical for various biological processes including autophagy initiation and autophagosome maturation (By similarity).</text>
</comment>
<comment type="catalytic activity">
    <reaction evidence="5 7">
        <text>a 1,2-diacyl-sn-glycero-3-phospho-(1D-myo-inositol-3,5-bisphosphate) + H2O = a 1,2-diacyl-sn-glycero-3-phospho-(1D-myo-inositol-5-phosphate) + phosphate</text>
        <dbReference type="Rhea" id="RHEA:39019"/>
        <dbReference type="ChEBI" id="CHEBI:15377"/>
        <dbReference type="ChEBI" id="CHEBI:43474"/>
        <dbReference type="ChEBI" id="CHEBI:57795"/>
        <dbReference type="ChEBI" id="CHEBI:57923"/>
        <dbReference type="EC" id="3.1.3.95"/>
    </reaction>
    <physiologicalReaction direction="left-to-right" evidence="11">
        <dbReference type="Rhea" id="RHEA:39020"/>
    </physiologicalReaction>
</comment>
<comment type="catalytic activity">
    <reaction evidence="5 7">
        <text>a 1,2-diacyl-sn-glycero-3-phospho-(1D-myo-inositol-3-phosphate) + H2O = a 1,2-diacyl-sn-glycero-3-phospho-(1D-myo-inositol) + phosphate</text>
        <dbReference type="Rhea" id="RHEA:12316"/>
        <dbReference type="ChEBI" id="CHEBI:15377"/>
        <dbReference type="ChEBI" id="CHEBI:43474"/>
        <dbReference type="ChEBI" id="CHEBI:57880"/>
        <dbReference type="ChEBI" id="CHEBI:58088"/>
    </reaction>
    <physiologicalReaction direction="left-to-right" evidence="11">
        <dbReference type="Rhea" id="RHEA:12317"/>
    </physiologicalReaction>
</comment>
<comment type="catalytic activity">
    <reaction evidence="1">
        <text>1,2-dioctanoyl-sn-glycero-3-phospho-(1-D-myo-inositol-3-phosphate) + H2O = 1,2-dioctanoyl-sn-glycero-3-phospho-(1D-myo-inositol) + phosphate</text>
        <dbReference type="Rhea" id="RHEA:42328"/>
        <dbReference type="ChEBI" id="CHEBI:15377"/>
        <dbReference type="ChEBI" id="CHEBI:43474"/>
        <dbReference type="ChEBI" id="CHEBI:65221"/>
        <dbReference type="ChEBI" id="CHEBI:78934"/>
    </reaction>
    <physiologicalReaction direction="left-to-right" evidence="1">
        <dbReference type="Rhea" id="RHEA:42329"/>
    </physiologicalReaction>
</comment>
<comment type="catalytic activity">
    <reaction evidence="1">
        <text>1,2-dioctanoyl-sn-glycero-3-phospho-(1D-myo-inositol-3,5-bisphosphate) + H2O = 1,2-dioctanoyl-sn-glycero-3-phospho-(1D-myo-inositol-5-phosphate) + phosphate</text>
        <dbReference type="Rhea" id="RHEA:45632"/>
        <dbReference type="ChEBI" id="CHEBI:15377"/>
        <dbReference type="ChEBI" id="CHEBI:43474"/>
        <dbReference type="ChEBI" id="CHEBI:78911"/>
        <dbReference type="ChEBI" id="CHEBI:85342"/>
    </reaction>
    <physiologicalReaction direction="left-to-right" evidence="1">
        <dbReference type="Rhea" id="RHEA:45633"/>
    </physiologicalReaction>
</comment>
<comment type="subunit">
    <text evidence="1 6 7">Homodimer (via coiled-coil domain) (PubMed:14530412, PubMed:16399794). Heterotetramer consisting of one MTMR2 dimer and one SBF2/MTMR13 dimer; specifically in peripheral nerves stabilizes SBF2/MTMR13 at the membranes and increases MTMR2 catalytic activity towards phosphatidylinositol 3,5-bisphosphate and to a lesser extent towards phosphatidylinositol 3-phosphate (PubMed:16399794, PubMed:23297362). Heterodimer with SBF1/MTMR5; acts as an adapter for the phosphatase MTMR2 to regulate MTMR2 catalytic activity and subcellular location (By similarity). Heterodimer with MTMR12 (By similarity).</text>
</comment>
<comment type="subcellular location">
    <subcellularLocation>
        <location evidence="6 7 8">Cytoplasm</location>
    </subcellularLocation>
    <subcellularLocation>
        <location evidence="1">Early endosome membrane</location>
        <topology evidence="1">Peripheral membrane protein</topology>
    </subcellularLocation>
    <subcellularLocation>
        <location evidence="6">Cytoplasm</location>
        <location evidence="6">Perinuclear region</location>
    </subcellularLocation>
    <subcellularLocation>
        <location evidence="8">Cell projection</location>
        <location evidence="8">Axon</location>
    </subcellularLocation>
    <subcellularLocation>
        <location evidence="8">Endosome membrane</location>
        <topology evidence="10">Peripheral membrane protein</topology>
    </subcellularLocation>
    <text evidence="6 7 8">Partly associated with membranes (PubMed:14530412, PubMed:23297362). Localizes to vacuoles in hypo-osmotic conditions (PubMed:16399794).</text>
</comment>
<comment type="tissue specificity">
    <text evidence="5 7 8 9">Expressed in sciatic nerve and in Schwann cells (at protein level) (PubMed:16399794, PubMed:23297362, PubMed:34718573). Detected in adult dorsal root ganglia, neurons of the central nervous system, motor neurons, cell soma and neurites of sensory neurons, olfactory bulb, cerebellum and hippocampus (PubMed:12045210).</text>
</comment>
<comment type="developmental stage">
    <text evidence="5 9">In 16.5 dpc embryos, expressed in forebrain, dorsal root ganglia, trigeminal ganglia, kidney, adrenal gland and lung. Highest expression in sciatic nerves at P7 (PubMed:34718573).</text>
</comment>
<comment type="domain">
    <text evidence="1 6">The coiled-coil domain mediates homodimerization (PubMed:14530412). Also mediates interaction with SBF1/MTMR5 and SBF2/MTMR13 (By similarity).</text>
</comment>
<comment type="domain">
    <text evidence="6">The GRAM domain mediates binding to phosphatidylinositol 4-phosphate, phosphatidylinositol 5-phosphate, phosphatidylinositol 3,5-biphosphate and phosphatidylinositol 3,4,5-trisphosphate.</text>
</comment>
<comment type="PTM">
    <text evidence="1">Phosphorylation at Ser-58 decreases MTMR2 localization to endocytic vesicular structures.</text>
</comment>
<comment type="disruption phenotype">
    <text evidence="8 9">SBF2/MTMR13 protein levels are decreased in sciatic nerves but not in the brain or in fibroblasts. Reduced Mtmr5 and Mtmr13 protein levels in sciatic nerves (PubMed:34718573). No impact on protein levels of Mtmr5 or Mtmr13 in brain extracts (PubMed:34718573).</text>
</comment>
<comment type="similarity">
    <text evidence="10">Belongs to the protein-tyrosine phosphatase family. Non-receptor class myotubularin subfamily.</text>
</comment>
<comment type="sequence caution" evidence="10">
    <conflict type="erroneous initiation">
        <sequence resource="EMBL-CDS" id="AAC80002"/>
    </conflict>
    <text>Extended N-terminus.</text>
</comment>
<proteinExistence type="evidence at protein level"/>
<protein>
    <recommendedName>
        <fullName evidence="11 12">Phosphatidylinositol-3,5-bisphosphate 3-phosphatase MTMR2</fullName>
        <ecNumber evidence="5 7">3.1.3.95</ecNumber>
    </recommendedName>
    <alternativeName>
        <fullName evidence="13">Myotubularin-related protein 2</fullName>
    </alternativeName>
    <alternativeName>
        <fullName evidence="11 12">Phosphatidylinositol-3-phosphate phosphatase</fullName>
    </alternativeName>
</protein>
<gene>
    <name evidence="13" type="primary">Mtmr2</name>
</gene>
<accession>Q9Z2D1</accession>
<accession>B8JJF4</accession>
<accession>Q8VHA7</accession>
<reference key="1">
    <citation type="submission" date="2001-09" db="EMBL/GenBank/DDBJ databases">
        <title>Molecular characterization and expression analysis of Mtmr2, mouse homolog of MTMR2, the myotubularin-related 2 gene, mutated in CMT4B.</title>
        <authorList>
            <person name="Bolino A."/>
            <person name="Marigo V."/>
            <person name="Loader J."/>
            <person name="Romio L."/>
            <person name="Leoni A."/>
            <person name="Di Duca M."/>
            <person name="Cinti R."/>
            <person name="Feltri M.L."/>
            <person name="Wrabetz L."/>
            <person name="Ravazzolo R."/>
            <person name="Monaco A.P."/>
        </authorList>
    </citation>
    <scope>NUCLEOTIDE SEQUENCE [MRNA]</scope>
</reference>
<reference key="2">
    <citation type="journal article" date="2009" name="PLoS Biol.">
        <title>Lineage-specific biology revealed by a finished genome assembly of the mouse.</title>
        <authorList>
            <person name="Church D.M."/>
            <person name="Goodstadt L."/>
            <person name="Hillier L.W."/>
            <person name="Zody M.C."/>
            <person name="Goldstein S."/>
            <person name="She X."/>
            <person name="Bult C.J."/>
            <person name="Agarwala R."/>
            <person name="Cherry J.L."/>
            <person name="DiCuccio M."/>
            <person name="Hlavina W."/>
            <person name="Kapustin Y."/>
            <person name="Meric P."/>
            <person name="Maglott D."/>
            <person name="Birtle Z."/>
            <person name="Marques A.C."/>
            <person name="Graves T."/>
            <person name="Zhou S."/>
            <person name="Teague B."/>
            <person name="Potamousis K."/>
            <person name="Churas C."/>
            <person name="Place M."/>
            <person name="Herschleb J."/>
            <person name="Runnheim R."/>
            <person name="Forrest D."/>
            <person name="Amos-Landgraf J."/>
            <person name="Schwartz D.C."/>
            <person name="Cheng Z."/>
            <person name="Lindblad-Toh K."/>
            <person name="Eichler E.E."/>
            <person name="Ponting C.P."/>
        </authorList>
    </citation>
    <scope>NUCLEOTIDE SEQUENCE [LARGE SCALE GENOMIC DNA]</scope>
    <source>
        <strain>C57BL/6J</strain>
    </source>
</reference>
<reference key="3">
    <citation type="submission" date="2005-07" db="EMBL/GenBank/DDBJ databases">
        <authorList>
            <person name="Mural R.J."/>
            <person name="Adams M.D."/>
            <person name="Myers E.W."/>
            <person name="Smith H.O."/>
            <person name="Venter J.C."/>
        </authorList>
    </citation>
    <scope>NUCLEOTIDE SEQUENCE [LARGE SCALE GENOMIC DNA]</scope>
</reference>
<reference key="4">
    <citation type="journal article" date="1998" name="Hum. Mol. Genet.">
        <title>Characterization of the myotubularin dual specificity phosphatase gene family from yeast to human.</title>
        <authorList>
            <person name="Laporte J."/>
            <person name="Blondeau F."/>
            <person name="Buj-Bello A."/>
            <person name="Tentler D."/>
            <person name="Kretz C."/>
            <person name="Dahl N."/>
            <person name="Mandel J.-L."/>
        </authorList>
    </citation>
    <scope>NUCLEOTIDE SEQUENCE [MRNA] OF 1-225</scope>
</reference>
<reference key="5">
    <citation type="journal article" date="2002" name="Hum. Mol. Genet.">
        <title>Loss of phosphatase activity in myotubularin-related protein 2 is associated with Charcot-Marie-Tooth disease type 4B1.</title>
        <authorList>
            <person name="Berger P."/>
            <person name="Bonneick S."/>
            <person name="Willi S."/>
            <person name="Wymann M."/>
            <person name="Suter U."/>
        </authorList>
    </citation>
    <scope>FUNCTION</scope>
    <scope>CATALYTIC ACTIVITY</scope>
    <scope>MUTAGENESIS OF GLY-103</scope>
    <scope>TISSUE SPECIFICITY</scope>
</reference>
<reference key="6">
    <citation type="journal article" date="2003" name="Proc. Natl. Acad. Sci. U.S.A.">
        <title>Membrane association of myotubularin-related protein 2 is mediated by a pleckstrin homology-GRAM domain and a coiled-coil dimerization module.</title>
        <authorList>
            <person name="Berger P."/>
            <person name="Schaffitzel C."/>
            <person name="Berger I."/>
            <person name="Ban N."/>
            <person name="Suter U."/>
        </authorList>
    </citation>
    <scope>SUBCELLULAR LOCATION</scope>
    <scope>MUTAGENESIS OF GLY-103 AND CYS-417</scope>
    <scope>SUBUNIT</scope>
    <scope>DOMAIN</scope>
</reference>
<reference key="7">
    <citation type="journal article" date="2006" name="Hum. Mol. Genet.">
        <title>Multi-level regulation of myotubularin-related protein-2 phosphatase activity by myotubularin-related protein-13/set-binding factor-2.</title>
        <authorList>
            <person name="Berger P."/>
            <person name="Berger I."/>
            <person name="Schaffitzel C."/>
            <person name="Tersar K."/>
            <person name="Volkmer B."/>
            <person name="Suter U."/>
        </authorList>
    </citation>
    <scope>FUNCTION</scope>
    <scope>CATALYTIC ACTIVITY</scope>
    <scope>INTERACTION WITH SBF2</scope>
    <scope>SUBUNIT</scope>
    <scope>SUBCELLULAR LOCATION</scope>
    <scope>TISSUE SPECIFICITY</scope>
    <scope>MUTAGENESIS OF CYS-417 AND 589-PRO--VAL-643</scope>
</reference>
<reference key="8">
    <citation type="journal article" date="2007" name="Proc. Natl. Acad. Sci. U.S.A.">
        <title>Large-scale phosphorylation analysis of mouse liver.</title>
        <authorList>
            <person name="Villen J."/>
            <person name="Beausoleil S.A."/>
            <person name="Gerber S.A."/>
            <person name="Gygi S.P."/>
        </authorList>
    </citation>
    <scope>PHOSPHORYLATION [LARGE SCALE ANALYSIS] AT SER-6</scope>
    <scope>IDENTIFICATION BY MASS SPECTROMETRY [LARGE SCALE ANALYSIS]</scope>
    <source>
        <tissue>Liver</tissue>
    </source>
</reference>
<reference key="9">
    <citation type="journal article" date="2010" name="Cell">
        <title>A tissue-specific atlas of mouse protein phosphorylation and expression.</title>
        <authorList>
            <person name="Huttlin E.L."/>
            <person name="Jedrychowski M.P."/>
            <person name="Elias J.E."/>
            <person name="Goswami T."/>
            <person name="Rad R."/>
            <person name="Beausoleil S.A."/>
            <person name="Villen J."/>
            <person name="Haas W."/>
            <person name="Sowa M.E."/>
            <person name="Gygi S.P."/>
        </authorList>
    </citation>
    <scope>PHOSPHORYLATION [LARGE SCALE ANALYSIS] AT SER-6; SER-9 AND SER-58</scope>
    <scope>IDENTIFICATION BY MASS SPECTROMETRY [LARGE SCALE ANALYSIS]</scope>
    <source>
        <tissue>Brain</tissue>
        <tissue>Brown adipose tissue</tissue>
        <tissue>Heart</tissue>
        <tissue>Kidney</tissue>
        <tissue>Liver</tissue>
        <tissue>Lung</tissue>
        <tissue>Pancreas</tissue>
        <tissue>Spleen</tissue>
        <tissue>Testis</tissue>
    </source>
</reference>
<reference key="10">
    <citation type="journal article" date="2013" name="Hum. Mol. Genet.">
        <title>The CMT4B disease-causing phosphatases Mtmr2 and Mtmr13 localize to the Schwann cell cytoplasm and endomembrane compartments, where they depend upon each other to achieve wild-type levels of protein expression.</title>
        <authorList>
            <person name="Ng A.A."/>
            <person name="Logan A.M."/>
            <person name="Schmidt E.J."/>
            <person name="Robinson F.L."/>
        </authorList>
    </citation>
    <scope>SUBCELLULAR LOCATION</scope>
    <scope>TISSUE SPECIFICITY</scope>
    <scope>DISRUPTION PHENOTYPE</scope>
    <scope>MUTAGENESIS OF 589-PRO--VAL-643</scope>
</reference>
<reference key="11">
    <citation type="journal article" date="2022" name="Hum. Mol. Genet.">
        <title>Distinct roles for the Charcot-Marie-Tooth disease-causing endosomal regulators Mtmr5 and Mtmr13 in axon radial sorting and Schwann cell myelination.</title>
        <authorList>
            <person name="Mammel A.E."/>
            <person name="Delgado K.C."/>
            <person name="Chin A.L."/>
            <person name="Condon A.F."/>
            <person name="Hill J.Q."/>
            <person name="Aicher S.A."/>
            <person name="Wang Y."/>
            <person name="Fedorov L.M."/>
            <person name="Robinson F.L."/>
        </authorList>
    </citation>
    <scope>TISSUE SPECIFICITY</scope>
    <scope>DEVELOPMENTAL STAGE</scope>
    <scope>DISRUPTION PHENOTYPE</scope>
</reference>
<sequence>MEKSSSCESLGAQLPAARLPSEDSLSSASTSHSENSVHTKSASAISSDSISTSADNFSPDLRVLREANKLAEMEEPALLPGENIKDMAKDVTYICPFTGAVRGTLTVTSYRLYFKSMERDPPFVLDASLGVISRVEKIGGASSRGENSYGLETVCKDIRNLRFAHKPEGRTRRSIFENLMKYAFPVSNGLPLFAFEYKEVFPENGWKLYDPLLEYRRQGIPNESWRITKINERYELCDTYPALLVVPANIPDEELKRVASFRSRGRIPVLSWIHPESQATVTRCSQPMVGVSGKRSKEDEKYLQAIMDSNAQSHKIFIFDARPSVNAVANKAKGGGYESEDAYQNAELVFLDIHNIHVMRESLRKLKEIVYPTIEETHWLSNLESTHWLEHIKLILAGALRIADKVESGKTSVVVHCSDGWDRTAQLTSLAMLMLDGYYRTIRGFEVLVEKEWLSFGHRFQLRVGHGDKNHADADRSPVFLQFIDCVWQMTRQFPTAFEFNEYFLITILDHLYSCLFGTFLCNSEQQRGKENLPKKTVSLWSYINSQLEDFTNPLYGSYSNHVLYPVASMRHLELWVGYYIRWNPRMKPQEPIHSRYKELLAKRAELQRKVEELQREISNRSTSSSERASSPAQCVTPVQTVV</sequence>
<dbReference type="EC" id="3.1.3.95" evidence="5 7"/>
<dbReference type="EMBL" id="AY055832">
    <property type="protein sequence ID" value="AAL14198.1"/>
    <property type="molecule type" value="mRNA"/>
</dbReference>
<dbReference type="EMBL" id="CT010488">
    <property type="status" value="NOT_ANNOTATED_CDS"/>
    <property type="molecule type" value="Genomic_DNA"/>
</dbReference>
<dbReference type="EMBL" id="CH466522">
    <property type="protein sequence ID" value="EDL24975.1"/>
    <property type="molecule type" value="Genomic_DNA"/>
</dbReference>
<dbReference type="EMBL" id="AF073880">
    <property type="protein sequence ID" value="AAC80002.1"/>
    <property type="status" value="ALT_INIT"/>
    <property type="molecule type" value="mRNA"/>
</dbReference>
<dbReference type="CCDS" id="CCDS22818.3"/>
<dbReference type="RefSeq" id="NP_076347.3">
    <property type="nucleotide sequence ID" value="NM_023858.4"/>
</dbReference>
<dbReference type="SMR" id="Q9Z2D1"/>
<dbReference type="BioGRID" id="218525">
    <property type="interactions" value="12"/>
</dbReference>
<dbReference type="FunCoup" id="Q9Z2D1">
    <property type="interactions" value="2667"/>
</dbReference>
<dbReference type="IntAct" id="Q9Z2D1">
    <property type="interactions" value="5"/>
</dbReference>
<dbReference type="STRING" id="10090.ENSMUSP00000034396"/>
<dbReference type="GlyGen" id="Q9Z2D1">
    <property type="glycosylation" value="1 site, 1 N-linked glycan (1 site)"/>
</dbReference>
<dbReference type="iPTMnet" id="Q9Z2D1"/>
<dbReference type="PhosphoSitePlus" id="Q9Z2D1"/>
<dbReference type="SwissPalm" id="Q9Z2D1"/>
<dbReference type="jPOST" id="Q9Z2D1"/>
<dbReference type="PaxDb" id="10090-ENSMUSP00000034396"/>
<dbReference type="PeptideAtlas" id="Q9Z2D1"/>
<dbReference type="ProteomicsDB" id="290069"/>
<dbReference type="Pumba" id="Q9Z2D1"/>
<dbReference type="Antibodypedia" id="31676">
    <property type="antibodies" value="270 antibodies from 30 providers"/>
</dbReference>
<dbReference type="DNASU" id="77116"/>
<dbReference type="Ensembl" id="ENSMUST00000034396.14">
    <property type="protein sequence ID" value="ENSMUSP00000034396.8"/>
    <property type="gene ID" value="ENSMUSG00000031918.17"/>
</dbReference>
<dbReference type="GeneID" id="77116"/>
<dbReference type="KEGG" id="mmu:77116"/>
<dbReference type="UCSC" id="uc009odz.2">
    <property type="organism name" value="mouse"/>
</dbReference>
<dbReference type="AGR" id="MGI:1924366"/>
<dbReference type="CTD" id="8898"/>
<dbReference type="MGI" id="MGI:1924366">
    <property type="gene designation" value="Mtmr2"/>
</dbReference>
<dbReference type="VEuPathDB" id="HostDB:ENSMUSG00000031918"/>
<dbReference type="eggNOG" id="KOG4471">
    <property type="taxonomic scope" value="Eukaryota"/>
</dbReference>
<dbReference type="GeneTree" id="ENSGT00940000153669"/>
<dbReference type="InParanoid" id="Q9Z2D1"/>
<dbReference type="OMA" id="WRATKIN"/>
<dbReference type="OrthoDB" id="271628at2759"/>
<dbReference type="PhylomeDB" id="Q9Z2D1"/>
<dbReference type="TreeFam" id="TF315197"/>
<dbReference type="BRENDA" id="3.1.3.95">
    <property type="organism ID" value="3474"/>
</dbReference>
<dbReference type="Reactome" id="R-MMU-1483248">
    <property type="pathway name" value="Synthesis of PIPs at the ER membrane"/>
</dbReference>
<dbReference type="Reactome" id="R-MMU-1660516">
    <property type="pathway name" value="Synthesis of PIPs at the early endosome membrane"/>
</dbReference>
<dbReference type="Reactome" id="R-MMU-1660517">
    <property type="pathway name" value="Synthesis of PIPs at the late endosome membrane"/>
</dbReference>
<dbReference type="BioGRID-ORCS" id="77116">
    <property type="hits" value="6 hits in 79 CRISPR screens"/>
</dbReference>
<dbReference type="ChiTaRS" id="Mtmr2">
    <property type="organism name" value="mouse"/>
</dbReference>
<dbReference type="PRO" id="PR:Q9Z2D1"/>
<dbReference type="Proteomes" id="UP000000589">
    <property type="component" value="Chromosome 9"/>
</dbReference>
<dbReference type="RNAct" id="Q9Z2D1">
    <property type="molecule type" value="protein"/>
</dbReference>
<dbReference type="Bgee" id="ENSMUSG00000031918">
    <property type="expression patterns" value="Expressed in humerus cartilage element and 204 other cell types or tissues"/>
</dbReference>
<dbReference type="ExpressionAtlas" id="Q9Z2D1">
    <property type="expression patterns" value="baseline and differential"/>
</dbReference>
<dbReference type="GO" id="GO:0030424">
    <property type="term" value="C:axon"/>
    <property type="evidence" value="ECO:0007669"/>
    <property type="project" value="UniProtKB-SubCell"/>
</dbReference>
<dbReference type="GO" id="GO:0005737">
    <property type="term" value="C:cytoplasm"/>
    <property type="evidence" value="ECO:0000314"/>
    <property type="project" value="MGI"/>
</dbReference>
<dbReference type="GO" id="GO:0005829">
    <property type="term" value="C:cytosol"/>
    <property type="evidence" value="ECO:0000250"/>
    <property type="project" value="UniProtKB"/>
</dbReference>
<dbReference type="GO" id="GO:0043197">
    <property type="term" value="C:dendritic spine"/>
    <property type="evidence" value="ECO:0007669"/>
    <property type="project" value="Ensembl"/>
</dbReference>
<dbReference type="GO" id="GO:0031901">
    <property type="term" value="C:early endosome membrane"/>
    <property type="evidence" value="ECO:0007669"/>
    <property type="project" value="UniProtKB-SubCell"/>
</dbReference>
<dbReference type="GO" id="GO:0005634">
    <property type="term" value="C:nucleus"/>
    <property type="evidence" value="ECO:0007669"/>
    <property type="project" value="Ensembl"/>
</dbReference>
<dbReference type="GO" id="GO:0048471">
    <property type="term" value="C:perinuclear region of cytoplasm"/>
    <property type="evidence" value="ECO:0007669"/>
    <property type="project" value="UniProtKB-SubCell"/>
</dbReference>
<dbReference type="GO" id="GO:0014069">
    <property type="term" value="C:postsynaptic density"/>
    <property type="evidence" value="ECO:0007669"/>
    <property type="project" value="Ensembl"/>
</dbReference>
<dbReference type="GO" id="GO:0097060">
    <property type="term" value="C:synaptic membrane"/>
    <property type="evidence" value="ECO:0007669"/>
    <property type="project" value="Ensembl"/>
</dbReference>
<dbReference type="GO" id="GO:0008021">
    <property type="term" value="C:synaptic vesicle"/>
    <property type="evidence" value="ECO:0007669"/>
    <property type="project" value="Ensembl"/>
</dbReference>
<dbReference type="GO" id="GO:0005774">
    <property type="term" value="C:vacuolar membrane"/>
    <property type="evidence" value="ECO:0000314"/>
    <property type="project" value="MGI"/>
</dbReference>
<dbReference type="GO" id="GO:0042802">
    <property type="term" value="F:identical protein binding"/>
    <property type="evidence" value="ECO:0000353"/>
    <property type="project" value="MGI"/>
</dbReference>
<dbReference type="GO" id="GO:0052866">
    <property type="term" value="F:phosphatidylinositol phosphate phosphatase activity"/>
    <property type="evidence" value="ECO:0000315"/>
    <property type="project" value="MGI"/>
</dbReference>
<dbReference type="GO" id="GO:0052629">
    <property type="term" value="F:phosphatidylinositol-3,5-bisphosphate 3-phosphatase activity"/>
    <property type="evidence" value="ECO:0000314"/>
    <property type="project" value="UniProtKB"/>
</dbReference>
<dbReference type="GO" id="GO:0004438">
    <property type="term" value="F:phosphatidylinositol-3-phosphate phosphatase activity"/>
    <property type="evidence" value="ECO:0000314"/>
    <property type="project" value="UniProtKB"/>
</dbReference>
<dbReference type="GO" id="GO:0097062">
    <property type="term" value="P:dendritic spine maintenance"/>
    <property type="evidence" value="ECO:0007669"/>
    <property type="project" value="Ensembl"/>
</dbReference>
<dbReference type="GO" id="GO:0032288">
    <property type="term" value="P:myelin assembly"/>
    <property type="evidence" value="ECO:0000315"/>
    <property type="project" value="MGI"/>
</dbReference>
<dbReference type="GO" id="GO:0042552">
    <property type="term" value="P:myelination"/>
    <property type="evidence" value="ECO:0000316"/>
    <property type="project" value="MGI"/>
</dbReference>
<dbReference type="GO" id="GO:0090394">
    <property type="term" value="P:negative regulation of excitatory postsynaptic potential"/>
    <property type="evidence" value="ECO:0007669"/>
    <property type="project" value="Ensembl"/>
</dbReference>
<dbReference type="GO" id="GO:0031642">
    <property type="term" value="P:negative regulation of myelination"/>
    <property type="evidence" value="ECO:0000315"/>
    <property type="project" value="MGI"/>
</dbReference>
<dbReference type="GO" id="GO:2000645">
    <property type="term" value="P:negative regulation of receptor catabolic process"/>
    <property type="evidence" value="ECO:0007669"/>
    <property type="project" value="Ensembl"/>
</dbReference>
<dbReference type="GO" id="GO:0002091">
    <property type="term" value="P:negative regulation of receptor internalization"/>
    <property type="evidence" value="ECO:0007669"/>
    <property type="project" value="Ensembl"/>
</dbReference>
<dbReference type="GO" id="GO:0048666">
    <property type="term" value="P:neuron development"/>
    <property type="evidence" value="ECO:0000316"/>
    <property type="project" value="MGI"/>
</dbReference>
<dbReference type="GO" id="GO:0046856">
    <property type="term" value="P:phosphatidylinositol dephosphorylation"/>
    <property type="evidence" value="ECO:0000314"/>
    <property type="project" value="MGI"/>
</dbReference>
<dbReference type="GO" id="GO:0046488">
    <property type="term" value="P:phosphatidylinositol metabolic process"/>
    <property type="evidence" value="ECO:0000315"/>
    <property type="project" value="MGI"/>
</dbReference>
<dbReference type="GO" id="GO:2000643">
    <property type="term" value="P:positive regulation of early endosome to late endosome transport"/>
    <property type="evidence" value="ECO:0007669"/>
    <property type="project" value="Ensembl"/>
</dbReference>
<dbReference type="GO" id="GO:0060304">
    <property type="term" value="P:regulation of phosphatidylinositol dephosphorylation"/>
    <property type="evidence" value="ECO:0007669"/>
    <property type="project" value="Ensembl"/>
</dbReference>
<dbReference type="CDD" id="cd14590">
    <property type="entry name" value="PTP-MTMR2"/>
    <property type="match status" value="1"/>
</dbReference>
<dbReference type="FunFam" id="2.30.29.30:FF:000038">
    <property type="entry name" value="Myotubularin 1, isoform CRA_a"/>
    <property type="match status" value="1"/>
</dbReference>
<dbReference type="Gene3D" id="2.30.29.30">
    <property type="entry name" value="Pleckstrin-homology domain (PH domain)/Phosphotyrosine-binding domain (PTB)"/>
    <property type="match status" value="1"/>
</dbReference>
<dbReference type="InterPro" id="IPR004182">
    <property type="entry name" value="GRAM"/>
</dbReference>
<dbReference type="InterPro" id="IPR030564">
    <property type="entry name" value="Myotubularin"/>
</dbReference>
<dbReference type="InterPro" id="IPR010569">
    <property type="entry name" value="Myotubularin-like_Pase_dom"/>
</dbReference>
<dbReference type="InterPro" id="IPR011993">
    <property type="entry name" value="PH-like_dom_sf"/>
</dbReference>
<dbReference type="InterPro" id="IPR029021">
    <property type="entry name" value="Prot-tyrosine_phosphatase-like"/>
</dbReference>
<dbReference type="InterPro" id="IPR016130">
    <property type="entry name" value="Tyr_Pase_AS"/>
</dbReference>
<dbReference type="InterPro" id="IPR003595">
    <property type="entry name" value="Tyr_Pase_cat"/>
</dbReference>
<dbReference type="InterPro" id="IPR000387">
    <property type="entry name" value="Tyr_Pase_dom"/>
</dbReference>
<dbReference type="PANTHER" id="PTHR10807">
    <property type="entry name" value="MYOTUBULARIN-RELATED"/>
    <property type="match status" value="1"/>
</dbReference>
<dbReference type="PANTHER" id="PTHR10807:SF42">
    <property type="entry name" value="MYOTUBULARIN-RELATED PROTEIN 2"/>
    <property type="match status" value="1"/>
</dbReference>
<dbReference type="Pfam" id="PF02893">
    <property type="entry name" value="GRAM"/>
    <property type="match status" value="1"/>
</dbReference>
<dbReference type="Pfam" id="PF06602">
    <property type="entry name" value="Myotub-related"/>
    <property type="match status" value="1"/>
</dbReference>
<dbReference type="SMART" id="SM00568">
    <property type="entry name" value="GRAM"/>
    <property type="match status" value="1"/>
</dbReference>
<dbReference type="SMART" id="SM00404">
    <property type="entry name" value="PTPc_motif"/>
    <property type="match status" value="1"/>
</dbReference>
<dbReference type="SUPFAM" id="SSF52799">
    <property type="entry name" value="(Phosphotyrosine protein) phosphatases II"/>
    <property type="match status" value="1"/>
</dbReference>
<dbReference type="SUPFAM" id="SSF50729">
    <property type="entry name" value="PH domain-like"/>
    <property type="match status" value="1"/>
</dbReference>
<dbReference type="PROSITE" id="PS51339">
    <property type="entry name" value="PPASE_MYOTUBULARIN"/>
    <property type="match status" value="1"/>
</dbReference>
<dbReference type="PROSITE" id="PS00383">
    <property type="entry name" value="TYR_PHOSPHATASE_1"/>
    <property type="match status" value="1"/>
</dbReference>
<dbReference type="PROSITE" id="PS50056">
    <property type="entry name" value="TYR_PHOSPHATASE_2"/>
    <property type="match status" value="1"/>
</dbReference>